<evidence type="ECO:0000255" key="1">
    <source>
        <dbReference type="HAMAP-Rule" id="MF_01343"/>
    </source>
</evidence>
<evidence type="ECO:0000305" key="2"/>
<name>RS15_BARHE</name>
<feature type="chain" id="PRO_0000115386" description="Small ribosomal subunit protein uS15">
    <location>
        <begin position="1"/>
        <end position="89"/>
    </location>
</feature>
<protein>
    <recommendedName>
        <fullName evidence="1">Small ribosomal subunit protein uS15</fullName>
    </recommendedName>
    <alternativeName>
        <fullName evidence="2">30S ribosomal protein S15</fullName>
    </alternativeName>
</protein>
<sequence>MSITAERKKAIVAEYANKVGDTGSPEVQVAVLSERIANLTNHFKFHKKDNHSRRGLLKMVSQRRRLLDYLKGIDQNRYQTLIKKLGLRR</sequence>
<proteinExistence type="inferred from homology"/>
<organism>
    <name type="scientific">Bartonella henselae (strain ATCC 49882 / DSM 28221 / CCUG 30454 / Houston 1)</name>
    <name type="common">Rochalimaea henselae</name>
    <dbReference type="NCBI Taxonomy" id="283166"/>
    <lineage>
        <taxon>Bacteria</taxon>
        <taxon>Pseudomonadati</taxon>
        <taxon>Pseudomonadota</taxon>
        <taxon>Alphaproteobacteria</taxon>
        <taxon>Hyphomicrobiales</taxon>
        <taxon>Bartonellaceae</taxon>
        <taxon>Bartonella</taxon>
    </lineage>
</organism>
<reference key="1">
    <citation type="journal article" date="2004" name="Proc. Natl. Acad. Sci. U.S.A.">
        <title>The louse-borne human pathogen Bartonella quintana is a genomic derivative of the zoonotic agent Bartonella henselae.</title>
        <authorList>
            <person name="Alsmark U.C.M."/>
            <person name="Frank A.C."/>
            <person name="Karlberg E.O."/>
            <person name="Legault B.-A."/>
            <person name="Ardell D.H."/>
            <person name="Canbaeck B."/>
            <person name="Eriksson A.-S."/>
            <person name="Naeslund A.K."/>
            <person name="Handley S.A."/>
            <person name="Huvet M."/>
            <person name="La Scola B."/>
            <person name="Holmberg M."/>
            <person name="Andersson S.G.E."/>
        </authorList>
    </citation>
    <scope>NUCLEOTIDE SEQUENCE [LARGE SCALE GENOMIC DNA]</scope>
    <source>
        <strain>ATCC 49882 / DSM 28221 / CCUG 30454 / Houston 1</strain>
    </source>
</reference>
<keyword id="KW-0687">Ribonucleoprotein</keyword>
<keyword id="KW-0689">Ribosomal protein</keyword>
<keyword id="KW-0694">RNA-binding</keyword>
<keyword id="KW-0699">rRNA-binding</keyword>
<gene>
    <name evidence="1" type="primary">rpsO</name>
    <name type="ordered locus">BH02110</name>
</gene>
<accession>Q6G5F7</accession>
<dbReference type="EMBL" id="BX897699">
    <property type="protein sequence ID" value="CAF27023.1"/>
    <property type="molecule type" value="Genomic_DNA"/>
</dbReference>
<dbReference type="RefSeq" id="WP_011180162.1">
    <property type="nucleotide sequence ID" value="NZ_LRIJ02000001.1"/>
</dbReference>
<dbReference type="SMR" id="Q6G5F7"/>
<dbReference type="PaxDb" id="283166-BH02110"/>
<dbReference type="EnsemblBacteria" id="CAF27023">
    <property type="protein sequence ID" value="CAF27023"/>
    <property type="gene ID" value="BH02110"/>
</dbReference>
<dbReference type="GeneID" id="92984878"/>
<dbReference type="KEGG" id="bhe:BH02110"/>
<dbReference type="eggNOG" id="COG0184">
    <property type="taxonomic scope" value="Bacteria"/>
</dbReference>
<dbReference type="OrthoDB" id="9799262at2"/>
<dbReference type="Proteomes" id="UP000000421">
    <property type="component" value="Chromosome"/>
</dbReference>
<dbReference type="GO" id="GO:0022627">
    <property type="term" value="C:cytosolic small ribosomal subunit"/>
    <property type="evidence" value="ECO:0007669"/>
    <property type="project" value="TreeGrafter"/>
</dbReference>
<dbReference type="GO" id="GO:0019843">
    <property type="term" value="F:rRNA binding"/>
    <property type="evidence" value="ECO:0007669"/>
    <property type="project" value="UniProtKB-UniRule"/>
</dbReference>
<dbReference type="GO" id="GO:0003735">
    <property type="term" value="F:structural constituent of ribosome"/>
    <property type="evidence" value="ECO:0007669"/>
    <property type="project" value="InterPro"/>
</dbReference>
<dbReference type="GO" id="GO:0006412">
    <property type="term" value="P:translation"/>
    <property type="evidence" value="ECO:0007669"/>
    <property type="project" value="UniProtKB-UniRule"/>
</dbReference>
<dbReference type="CDD" id="cd00353">
    <property type="entry name" value="Ribosomal_S15p_S13e"/>
    <property type="match status" value="1"/>
</dbReference>
<dbReference type="FunFam" id="1.10.287.10:FF:000002">
    <property type="entry name" value="30S ribosomal protein S15"/>
    <property type="match status" value="1"/>
</dbReference>
<dbReference type="Gene3D" id="6.10.250.3130">
    <property type="match status" value="1"/>
</dbReference>
<dbReference type="Gene3D" id="1.10.287.10">
    <property type="entry name" value="S15/NS1, RNA-binding"/>
    <property type="match status" value="1"/>
</dbReference>
<dbReference type="HAMAP" id="MF_01343_B">
    <property type="entry name" value="Ribosomal_uS15_B"/>
    <property type="match status" value="1"/>
</dbReference>
<dbReference type="InterPro" id="IPR000589">
    <property type="entry name" value="Ribosomal_uS15"/>
</dbReference>
<dbReference type="InterPro" id="IPR005290">
    <property type="entry name" value="Ribosomal_uS15_bac-type"/>
</dbReference>
<dbReference type="InterPro" id="IPR009068">
    <property type="entry name" value="uS15_NS1_RNA-bd_sf"/>
</dbReference>
<dbReference type="NCBIfam" id="TIGR00952">
    <property type="entry name" value="S15_bact"/>
    <property type="match status" value="1"/>
</dbReference>
<dbReference type="PANTHER" id="PTHR23321">
    <property type="entry name" value="RIBOSOMAL PROTEIN S15, BACTERIAL AND ORGANELLAR"/>
    <property type="match status" value="1"/>
</dbReference>
<dbReference type="PANTHER" id="PTHR23321:SF26">
    <property type="entry name" value="SMALL RIBOSOMAL SUBUNIT PROTEIN US15M"/>
    <property type="match status" value="1"/>
</dbReference>
<dbReference type="Pfam" id="PF00312">
    <property type="entry name" value="Ribosomal_S15"/>
    <property type="match status" value="1"/>
</dbReference>
<dbReference type="SMART" id="SM01387">
    <property type="entry name" value="Ribosomal_S15"/>
    <property type="match status" value="1"/>
</dbReference>
<dbReference type="SUPFAM" id="SSF47060">
    <property type="entry name" value="S15/NS1 RNA-binding domain"/>
    <property type="match status" value="1"/>
</dbReference>
<dbReference type="PROSITE" id="PS00362">
    <property type="entry name" value="RIBOSOMAL_S15"/>
    <property type="match status" value="1"/>
</dbReference>
<comment type="function">
    <text evidence="1">One of the primary rRNA binding proteins, it binds directly to 16S rRNA where it helps nucleate assembly of the platform of the 30S subunit by binding and bridging several RNA helices of the 16S rRNA.</text>
</comment>
<comment type="function">
    <text evidence="1">Forms an intersubunit bridge (bridge B4) with the 23S rRNA of the 50S subunit in the ribosome.</text>
</comment>
<comment type="subunit">
    <text evidence="1">Part of the 30S ribosomal subunit. Forms a bridge to the 50S subunit in the 70S ribosome, contacting the 23S rRNA.</text>
</comment>
<comment type="similarity">
    <text evidence="1">Belongs to the universal ribosomal protein uS15 family.</text>
</comment>